<reference key="1">
    <citation type="journal article" date="2004" name="AIDS">
        <title>Phylogenetic characteristics of three new HIV-1 N strains and implications for the origin of group N.</title>
        <authorList>
            <person name="Roques P."/>
            <person name="Robertson D.L."/>
            <person name="Souquiere S."/>
            <person name="Apetrei C."/>
            <person name="Nerrienet E."/>
            <person name="Barre-Sinoussi F."/>
            <person name="Muller-Trutwin M."/>
            <person name="Simon F."/>
        </authorList>
    </citation>
    <scope>NUCLEOTIDE SEQUENCE [GENOMIC DNA]</scope>
    <source>
        <strain>CM_YBF106</strain>
    </source>
</reference>
<sequence length="74" mass="8682">MLWLGFIALGVAIIIAAIIWVLLYKEYKKIKLQEKIEQIRQKIRDRTEDRGKESDGDAEWLAILLSPDKLDNWV</sequence>
<evidence type="ECO:0000255" key="1">
    <source>
        <dbReference type="HAMAP-Rule" id="MF_04082"/>
    </source>
</evidence>
<comment type="function">
    <text evidence="1">Enhances virion budding by targeting host CD4 and Tetherin/BST2 to proteasome degradation. Degradation of CD4 prevents any unwanted premature interactions between viral Env and its host receptor CD4 in the endoplasmic reticulum. Degradation of antiretroviral protein Tetherin/BST2 is important for virion budding, as BST2 tethers new viral particles to the host cell membrane. Mechanistically, Vpu bridges either CD4 or BST2 to BTRC, a substrate recognition subunit of the Skp1/Cullin/F-box protein E3 ubiquitin ligase, induces their ubiquitination and subsequent proteasomal degradation. The alteration of the E3 ligase specificity by Vpu seems to promote the degradation of host IKBKB, leading to NF-kappa-B down-regulation and subsequent apoptosis. Acts as a viroporin that forms an oligomeric ion channel in membranes. Modulates the host DNA repair mechanisms to promote degradation of nuclear viral cDNA in cells that are already productively infected in order to suppress immune sensing and proviral hyper-integration (superinfection). Manipulates PML-NBs and modulates SUMOylation of host BLM protein thereby enhancing its DNA-end processing activity toward viral unintegrated linear DNA. Also inhibits RAD52-mediated homologous repair of viral cDNA, preventing the generation of dead-end circular forms of single copies of the long terminal repeat and permitting sustained nucleolytic attack.</text>
</comment>
<comment type="activity regulation">
    <text evidence="1">Ion channel activity is inhibited by hexamethylene amiloride in vitro.</text>
</comment>
<comment type="subunit">
    <text evidence="1">Homopentamer. Interacts with host CD4 and BRTC; these interactions induce proteasomal degradation of CD4. Interacts with host BST2; this interaction leads to the degradation of host BST2. Interacts with host FBXW11. Interacts with host AP1M1; this interaction plays a role in the mistrafficking and subsequent degradation of host BST2. Interacts with host RANBP2; this interaction allows Vpu to down-regulate host BLM sumoylation.</text>
</comment>
<comment type="subcellular location">
    <subcellularLocation>
        <location evidence="1">Host membrane</location>
        <topology evidence="1">Single-pass type I membrane protein</topology>
    </subcellularLocation>
</comment>
<comment type="domain">
    <text evidence="1">The N-terminus and transmembrane domains are required for self-oligomerization and proper virion budding, whereas the cytoplasmic domain is required for CD4 degradation. The cytoplasmic domain is composed of 2 amphipathic alpha helix that form a U-shape.</text>
</comment>
<comment type="PTM">
    <text evidence="1">Phosphorylated by host CK2. This phosphorylation is necessary for interaction with human BTRC and degradation of CD4.</text>
</comment>
<comment type="miscellaneous">
    <text evidence="1">HIV-1 lineages are divided in three main groups, M (for Major), O (for Outlier), and N (for New, or Non-M, Non-O). The vast majority of strains found worldwide belong to the group M. Group O seems to be endemic to and largely confined to Cameroon and neighboring countries in West Central Africa, where these viruses represent a small minority of HIV-1 strains. The group N is represented by a limited number of isolates from Cameroonian persons. The group M is further subdivided in 9 clades or subtypes (A to D, F to H, J and K).</text>
</comment>
<comment type="similarity">
    <text evidence="1">Belongs to the HIV-1 VPU protein family.</text>
</comment>
<dbReference type="EMBL" id="AJ271370">
    <property type="protein sequence ID" value="CAB96344.1"/>
    <property type="molecule type" value="Genomic_DNA"/>
</dbReference>
<dbReference type="IntAct" id="Q9IDV3">
    <property type="interactions" value="1"/>
</dbReference>
<dbReference type="MINT" id="Q9IDV3"/>
<dbReference type="Proteomes" id="UP000007714">
    <property type="component" value="Segment"/>
</dbReference>
<dbReference type="GO" id="GO:0033644">
    <property type="term" value="C:host cell membrane"/>
    <property type="evidence" value="ECO:0007669"/>
    <property type="project" value="UniProtKB-SubCell"/>
</dbReference>
<dbReference type="GO" id="GO:0016020">
    <property type="term" value="C:membrane"/>
    <property type="evidence" value="ECO:0007669"/>
    <property type="project" value="UniProtKB-UniRule"/>
</dbReference>
<dbReference type="GO" id="GO:0042609">
    <property type="term" value="F:CD4 receptor binding"/>
    <property type="evidence" value="ECO:0007669"/>
    <property type="project" value="UniProtKB-UniRule"/>
</dbReference>
<dbReference type="GO" id="GO:0005261">
    <property type="term" value="F:monoatomic cation channel activity"/>
    <property type="evidence" value="ECO:0007669"/>
    <property type="project" value="UniProtKB-UniRule"/>
</dbReference>
<dbReference type="GO" id="GO:0032801">
    <property type="term" value="P:receptor catabolic process"/>
    <property type="evidence" value="ECO:0007669"/>
    <property type="project" value="UniProtKB-UniRule"/>
</dbReference>
<dbReference type="GO" id="GO:0052170">
    <property type="term" value="P:symbiont-mediated suppression of host innate immune response"/>
    <property type="evidence" value="ECO:0007669"/>
    <property type="project" value="UniProtKB-KW"/>
</dbReference>
<dbReference type="GO" id="GO:0039502">
    <property type="term" value="P:symbiont-mediated suppression of host type I interferon-mediated signaling pathway"/>
    <property type="evidence" value="ECO:0007669"/>
    <property type="project" value="UniProtKB-UniRule"/>
</dbReference>
<dbReference type="GO" id="GO:0039587">
    <property type="term" value="P:symbiont-mediated-mediated suppression of host tetherin activity"/>
    <property type="evidence" value="ECO:0007669"/>
    <property type="project" value="UniProtKB-UniRule"/>
</dbReference>
<dbReference type="GO" id="GO:0019076">
    <property type="term" value="P:viral release from host cell"/>
    <property type="evidence" value="ECO:0007669"/>
    <property type="project" value="UniProtKB-UniRule"/>
</dbReference>
<dbReference type="Gene3D" id="1.10.195.10">
    <property type="entry name" value="HIV-1 VPU cytoplasmic domain"/>
    <property type="match status" value="1"/>
</dbReference>
<dbReference type="HAMAP" id="MF_04082">
    <property type="entry name" value="HIV_VPU"/>
    <property type="match status" value="1"/>
</dbReference>
<dbReference type="InterPro" id="IPR008187">
    <property type="entry name" value="Vpu"/>
</dbReference>
<dbReference type="InterPro" id="IPR009032">
    <property type="entry name" value="Vpu_cyt_dom_sf"/>
</dbReference>
<dbReference type="Pfam" id="PF00558">
    <property type="entry name" value="Vpu"/>
    <property type="match status" value="1"/>
</dbReference>
<dbReference type="SUPFAM" id="SSF57647">
    <property type="entry name" value="HIV-1 VPU cytoplasmic domain"/>
    <property type="match status" value="1"/>
</dbReference>
<keyword id="KW-0014">AIDS</keyword>
<keyword id="KW-0053">Apoptosis</keyword>
<keyword id="KW-1043">Host membrane</keyword>
<keyword id="KW-0945">Host-virus interaction</keyword>
<keyword id="KW-1090">Inhibition of host innate immune response by virus</keyword>
<keyword id="KW-1084">Inhibition of host tetherin by virus</keyword>
<keyword id="KW-0407">Ion channel</keyword>
<keyword id="KW-0406">Ion transport</keyword>
<keyword id="KW-0472">Membrane</keyword>
<keyword id="KW-0597">Phosphoprotein</keyword>
<keyword id="KW-0812">Transmembrane</keyword>
<keyword id="KW-1133">Transmembrane helix</keyword>
<keyword id="KW-0813">Transport</keyword>
<keyword id="KW-0899">Viral immunoevasion</keyword>
<accession>Q9IDV3</accession>
<protein>
    <recommendedName>
        <fullName evidence="1">Protein Vpu</fullName>
    </recommendedName>
    <alternativeName>
        <fullName evidence="1">U ORF protein</fullName>
    </alternativeName>
    <alternativeName>
        <fullName evidence="1">Viral protein U</fullName>
    </alternativeName>
</protein>
<organism>
    <name type="scientific">Human immunodeficiency virus type 1 group N (isolate YBF106)</name>
    <name type="common">HIV-1</name>
    <dbReference type="NCBI Taxonomy" id="388819"/>
    <lineage>
        <taxon>Viruses</taxon>
        <taxon>Riboviria</taxon>
        <taxon>Pararnavirae</taxon>
        <taxon>Artverviricota</taxon>
        <taxon>Revtraviricetes</taxon>
        <taxon>Ortervirales</taxon>
        <taxon>Retroviridae</taxon>
        <taxon>Orthoretrovirinae</taxon>
        <taxon>Lentivirus</taxon>
        <taxon>Human immunodeficiency virus type 1</taxon>
    </lineage>
</organism>
<proteinExistence type="inferred from homology"/>
<feature type="chain" id="PRO_0000244329" description="Protein Vpu">
    <location>
        <begin position="1"/>
        <end position="74"/>
    </location>
</feature>
<feature type="topological domain" description="Extracellular" evidence="1">
    <location>
        <begin position="1"/>
        <end position="4"/>
    </location>
</feature>
<feature type="transmembrane region" description="Helical" evidence="1">
    <location>
        <begin position="5"/>
        <end position="25"/>
    </location>
</feature>
<feature type="topological domain" description="Cytoplasmic" evidence="1">
    <location>
        <begin position="26"/>
        <end position="74"/>
    </location>
</feature>
<feature type="modified residue" description="Phosphoserine; by host CK2" evidence="1">
    <location>
        <position position="54"/>
    </location>
</feature>
<organismHost>
    <name type="scientific">Homo sapiens</name>
    <name type="common">Human</name>
    <dbReference type="NCBI Taxonomy" id="9606"/>
</organismHost>
<gene>
    <name evidence="1" type="primary">vpu</name>
</gene>
<name>VPU_HV1YB</name>